<sequence length="360" mass="37733">MERTLAHVPSMELSTEALLVTGGLDNTNKMITSSAVRNDDGTMISQHSEKVSYGTSGAPDGSTPPVTAAGGGSEGNGIGGGGGGGGGMVGDGTGHSVGSSASGNDDDKPAKQKRHRTRFTPAQLNELERNFAKTHYPDIFMREEIAMRVGLTESRVQVWFQNRRAKWKKRKKTTNVFRTPGALLPSHGLAQFPSPMNDSFCNFHGQDTRGWPAMSGMTTHMAPHMTTHMPSHQMSQMGGGPGSALALPPSIPRQGLGQSMQQQTVNCTMGQSTGLNTLSMGTNGSMGSMTSMYQPSLGGMTTGSMSSGLSSPSPPNLPVSDSSTDLSCSVSDAGDMWRGTSIASLRRKALEHAASLNGNL</sequence>
<proteinExistence type="evidence at transcript level"/>
<name>OTP_LYTVA</name>
<dbReference type="EMBL" id="AY445031">
    <property type="protein sequence ID" value="AAR17090.1"/>
    <property type="molecule type" value="mRNA"/>
</dbReference>
<dbReference type="SMR" id="Q6SZ65"/>
<dbReference type="EnsemblMetazoa" id="XM_041609633.1">
    <property type="protein sequence ID" value="XP_041465567.1"/>
    <property type="gene ID" value="LOC121416157"/>
</dbReference>
<dbReference type="OrthoDB" id="6159439at2759"/>
<dbReference type="GO" id="GO:0005634">
    <property type="term" value="C:nucleus"/>
    <property type="evidence" value="ECO:0007669"/>
    <property type="project" value="UniProtKB-SubCell"/>
</dbReference>
<dbReference type="GO" id="GO:0003677">
    <property type="term" value="F:DNA binding"/>
    <property type="evidence" value="ECO:0007669"/>
    <property type="project" value="UniProtKB-KW"/>
</dbReference>
<dbReference type="GO" id="GO:0000981">
    <property type="term" value="F:DNA-binding transcription factor activity, RNA polymerase II-specific"/>
    <property type="evidence" value="ECO:0007669"/>
    <property type="project" value="InterPro"/>
</dbReference>
<dbReference type="GO" id="GO:0030182">
    <property type="term" value="P:neuron differentiation"/>
    <property type="evidence" value="ECO:0007669"/>
    <property type="project" value="TreeGrafter"/>
</dbReference>
<dbReference type="CDD" id="cd00086">
    <property type="entry name" value="homeodomain"/>
    <property type="match status" value="1"/>
</dbReference>
<dbReference type="FunFam" id="1.10.10.60:FF:000719">
    <property type="entry name" value="Homeobox protein orthopedia-like Protein"/>
    <property type="match status" value="1"/>
</dbReference>
<dbReference type="Gene3D" id="1.10.10.60">
    <property type="entry name" value="Homeodomain-like"/>
    <property type="match status" value="1"/>
</dbReference>
<dbReference type="InterPro" id="IPR001356">
    <property type="entry name" value="HD"/>
</dbReference>
<dbReference type="InterPro" id="IPR017970">
    <property type="entry name" value="Homeobox_CS"/>
</dbReference>
<dbReference type="InterPro" id="IPR009057">
    <property type="entry name" value="Homeodomain-like_sf"/>
</dbReference>
<dbReference type="InterPro" id="IPR000047">
    <property type="entry name" value="HTH_motif"/>
</dbReference>
<dbReference type="InterPro" id="IPR003654">
    <property type="entry name" value="OAR_dom"/>
</dbReference>
<dbReference type="InterPro" id="IPR051895">
    <property type="entry name" value="OTP_Homeobox"/>
</dbReference>
<dbReference type="PANTHER" id="PTHR46770">
    <property type="entry name" value="HOMEOBOX PROTEIN ORTHOPEDIA"/>
    <property type="match status" value="1"/>
</dbReference>
<dbReference type="PANTHER" id="PTHR46770:SF1">
    <property type="entry name" value="HOMEOBOX PROTEIN ORTHOPEDIA"/>
    <property type="match status" value="1"/>
</dbReference>
<dbReference type="Pfam" id="PF00046">
    <property type="entry name" value="Homeodomain"/>
    <property type="match status" value="1"/>
</dbReference>
<dbReference type="Pfam" id="PF03826">
    <property type="entry name" value="OAR"/>
    <property type="match status" value="1"/>
</dbReference>
<dbReference type="PRINTS" id="PR00031">
    <property type="entry name" value="HTHREPRESSR"/>
</dbReference>
<dbReference type="SMART" id="SM00389">
    <property type="entry name" value="HOX"/>
    <property type="match status" value="1"/>
</dbReference>
<dbReference type="SUPFAM" id="SSF46689">
    <property type="entry name" value="Homeodomain-like"/>
    <property type="match status" value="1"/>
</dbReference>
<dbReference type="PROSITE" id="PS00027">
    <property type="entry name" value="HOMEOBOX_1"/>
    <property type="match status" value="1"/>
</dbReference>
<dbReference type="PROSITE" id="PS50071">
    <property type="entry name" value="HOMEOBOX_2"/>
    <property type="match status" value="1"/>
</dbReference>
<dbReference type="PROSITE" id="PS50803">
    <property type="entry name" value="OAR"/>
    <property type="match status" value="1"/>
</dbReference>
<gene>
    <name type="primary">Otp</name>
</gene>
<evidence type="ECO:0000255" key="1">
    <source>
        <dbReference type="PROSITE-ProRule" id="PRU00108"/>
    </source>
</evidence>
<evidence type="ECO:0000255" key="2">
    <source>
        <dbReference type="PROSITE-ProRule" id="PRU00138"/>
    </source>
</evidence>
<evidence type="ECO:0000256" key="3">
    <source>
        <dbReference type="SAM" id="MobiDB-lite"/>
    </source>
</evidence>
<evidence type="ECO:0000305" key="4"/>
<reference key="1">
    <citation type="submission" date="2003-10" db="EMBL/GenBank/DDBJ databases">
        <title>The pathway p38 MAPK-Goosecoid-Orthopedia is required for axis specification in the sea urchin embryo.</title>
        <authorList>
            <person name="Bradham C.A."/>
            <person name="Miranda E.L."/>
            <person name="McClay D.R."/>
        </authorList>
    </citation>
    <scope>NUCLEOTIDE SEQUENCE [MRNA]</scope>
</reference>
<comment type="subcellular location">
    <subcellularLocation>
        <location evidence="1 2">Nucleus</location>
    </subcellularLocation>
</comment>
<comment type="similarity">
    <text evidence="4">Belongs to the paired homeobox family. Bicoid subfamily.</text>
</comment>
<organism>
    <name type="scientific">Lytechinus variegatus</name>
    <name type="common">Green sea urchin</name>
    <name type="synonym">Echinus variegatus</name>
    <dbReference type="NCBI Taxonomy" id="7654"/>
    <lineage>
        <taxon>Eukaryota</taxon>
        <taxon>Metazoa</taxon>
        <taxon>Echinodermata</taxon>
        <taxon>Eleutherozoa</taxon>
        <taxon>Echinozoa</taxon>
        <taxon>Echinoidea</taxon>
        <taxon>Euechinoidea</taxon>
        <taxon>Echinacea</taxon>
        <taxon>Temnopleuroida</taxon>
        <taxon>Toxopneustidae</taxon>
        <taxon>Lytechinus</taxon>
    </lineage>
</organism>
<protein>
    <recommendedName>
        <fullName>Homeobox protein orthopedia</fullName>
    </recommendedName>
</protein>
<keyword id="KW-0217">Developmental protein</keyword>
<keyword id="KW-0238">DNA-binding</keyword>
<keyword id="KW-0371">Homeobox</keyword>
<keyword id="KW-0539">Nucleus</keyword>
<keyword id="KW-0804">Transcription</keyword>
<keyword id="KW-0805">Transcription regulation</keyword>
<feature type="chain" id="PRO_0000292436" description="Homeobox protein orthopedia">
    <location>
        <begin position="1"/>
        <end position="360"/>
    </location>
</feature>
<feature type="DNA-binding region" description="Homeobox" evidence="1">
    <location>
        <begin position="112"/>
        <end position="171"/>
    </location>
</feature>
<feature type="region of interest" description="Disordered" evidence="3">
    <location>
        <begin position="48"/>
        <end position="117"/>
    </location>
</feature>
<feature type="region of interest" description="Disordered" evidence="3">
    <location>
        <begin position="295"/>
        <end position="326"/>
    </location>
</feature>
<feature type="short sequence motif" description="OAR" evidence="2">
    <location>
        <begin position="340"/>
        <end position="353"/>
    </location>
</feature>
<feature type="compositionally biased region" description="Gly residues" evidence="3">
    <location>
        <begin position="69"/>
        <end position="95"/>
    </location>
</feature>
<feature type="compositionally biased region" description="Low complexity" evidence="3">
    <location>
        <begin position="295"/>
        <end position="311"/>
    </location>
</feature>
<accession>Q6SZ65</accession>